<name>SYS_THENN</name>
<evidence type="ECO:0000255" key="1">
    <source>
        <dbReference type="HAMAP-Rule" id="MF_00176"/>
    </source>
</evidence>
<comment type="function">
    <text evidence="1">Catalyzes the attachment of serine to tRNA(Ser). Is also able to aminoacylate tRNA(Sec) with serine, to form the misacylated tRNA L-seryl-tRNA(Sec), which will be further converted into selenocysteinyl-tRNA(Sec).</text>
</comment>
<comment type="catalytic activity">
    <reaction evidence="1">
        <text>tRNA(Ser) + L-serine + ATP = L-seryl-tRNA(Ser) + AMP + diphosphate + H(+)</text>
        <dbReference type="Rhea" id="RHEA:12292"/>
        <dbReference type="Rhea" id="RHEA-COMP:9669"/>
        <dbReference type="Rhea" id="RHEA-COMP:9703"/>
        <dbReference type="ChEBI" id="CHEBI:15378"/>
        <dbReference type="ChEBI" id="CHEBI:30616"/>
        <dbReference type="ChEBI" id="CHEBI:33019"/>
        <dbReference type="ChEBI" id="CHEBI:33384"/>
        <dbReference type="ChEBI" id="CHEBI:78442"/>
        <dbReference type="ChEBI" id="CHEBI:78533"/>
        <dbReference type="ChEBI" id="CHEBI:456215"/>
        <dbReference type="EC" id="6.1.1.11"/>
    </reaction>
</comment>
<comment type="catalytic activity">
    <reaction evidence="1">
        <text>tRNA(Sec) + L-serine + ATP = L-seryl-tRNA(Sec) + AMP + diphosphate + H(+)</text>
        <dbReference type="Rhea" id="RHEA:42580"/>
        <dbReference type="Rhea" id="RHEA-COMP:9742"/>
        <dbReference type="Rhea" id="RHEA-COMP:10128"/>
        <dbReference type="ChEBI" id="CHEBI:15378"/>
        <dbReference type="ChEBI" id="CHEBI:30616"/>
        <dbReference type="ChEBI" id="CHEBI:33019"/>
        <dbReference type="ChEBI" id="CHEBI:33384"/>
        <dbReference type="ChEBI" id="CHEBI:78442"/>
        <dbReference type="ChEBI" id="CHEBI:78533"/>
        <dbReference type="ChEBI" id="CHEBI:456215"/>
        <dbReference type="EC" id="6.1.1.11"/>
    </reaction>
</comment>
<comment type="pathway">
    <text evidence="1">Aminoacyl-tRNA biosynthesis; selenocysteinyl-tRNA(Sec) biosynthesis; L-seryl-tRNA(Sec) from L-serine and tRNA(Sec): step 1/1.</text>
</comment>
<comment type="subunit">
    <text evidence="1">Homodimer. The tRNA molecule binds across the dimer.</text>
</comment>
<comment type="subcellular location">
    <subcellularLocation>
        <location evidence="1">Cytoplasm</location>
    </subcellularLocation>
</comment>
<comment type="domain">
    <text evidence="1">Consists of two distinct domains, a catalytic core and a N-terminal extension that is involved in tRNA binding.</text>
</comment>
<comment type="similarity">
    <text evidence="1">Belongs to the class-II aminoacyl-tRNA synthetase family. Type-1 seryl-tRNA synthetase subfamily.</text>
</comment>
<keyword id="KW-0030">Aminoacyl-tRNA synthetase</keyword>
<keyword id="KW-0067">ATP-binding</keyword>
<keyword id="KW-0963">Cytoplasm</keyword>
<keyword id="KW-0436">Ligase</keyword>
<keyword id="KW-0547">Nucleotide-binding</keyword>
<keyword id="KW-0648">Protein biosynthesis</keyword>
<feature type="chain" id="PRO_1000199514" description="Serine--tRNA ligase">
    <location>
        <begin position="1"/>
        <end position="425"/>
    </location>
</feature>
<feature type="binding site" evidence="1">
    <location>
        <begin position="233"/>
        <end position="235"/>
    </location>
    <ligand>
        <name>L-serine</name>
        <dbReference type="ChEBI" id="CHEBI:33384"/>
    </ligand>
</feature>
<feature type="binding site" evidence="1">
    <location>
        <begin position="264"/>
        <end position="266"/>
    </location>
    <ligand>
        <name>ATP</name>
        <dbReference type="ChEBI" id="CHEBI:30616"/>
    </ligand>
</feature>
<feature type="binding site" evidence="1">
    <location>
        <position position="287"/>
    </location>
    <ligand>
        <name>L-serine</name>
        <dbReference type="ChEBI" id="CHEBI:33384"/>
    </ligand>
</feature>
<feature type="binding site" evidence="1">
    <location>
        <begin position="351"/>
        <end position="354"/>
    </location>
    <ligand>
        <name>ATP</name>
        <dbReference type="ChEBI" id="CHEBI:30616"/>
    </ligand>
</feature>
<feature type="binding site" evidence="1">
    <location>
        <position position="387"/>
    </location>
    <ligand>
        <name>L-serine</name>
        <dbReference type="ChEBI" id="CHEBI:33384"/>
    </ligand>
</feature>
<gene>
    <name evidence="1" type="primary">serS</name>
    <name type="ordered locus">CTN_1212</name>
</gene>
<dbReference type="EC" id="6.1.1.11" evidence="1"/>
<dbReference type="EMBL" id="CP000916">
    <property type="protein sequence ID" value="ACM23388.1"/>
    <property type="molecule type" value="Genomic_DNA"/>
</dbReference>
<dbReference type="RefSeq" id="WP_015919703.1">
    <property type="nucleotide sequence ID" value="NC_011978.1"/>
</dbReference>
<dbReference type="SMR" id="B9K8V5"/>
<dbReference type="STRING" id="309803.CTN_1212"/>
<dbReference type="KEGG" id="tna:CTN_1212"/>
<dbReference type="eggNOG" id="COG0172">
    <property type="taxonomic scope" value="Bacteria"/>
</dbReference>
<dbReference type="HOGENOM" id="CLU_023797_1_1_0"/>
<dbReference type="UniPathway" id="UPA00906">
    <property type="reaction ID" value="UER00895"/>
</dbReference>
<dbReference type="Proteomes" id="UP000000445">
    <property type="component" value="Chromosome"/>
</dbReference>
<dbReference type="GO" id="GO:0005737">
    <property type="term" value="C:cytoplasm"/>
    <property type="evidence" value="ECO:0007669"/>
    <property type="project" value="UniProtKB-SubCell"/>
</dbReference>
<dbReference type="GO" id="GO:0005524">
    <property type="term" value="F:ATP binding"/>
    <property type="evidence" value="ECO:0007669"/>
    <property type="project" value="UniProtKB-UniRule"/>
</dbReference>
<dbReference type="GO" id="GO:0004828">
    <property type="term" value="F:serine-tRNA ligase activity"/>
    <property type="evidence" value="ECO:0007669"/>
    <property type="project" value="UniProtKB-UniRule"/>
</dbReference>
<dbReference type="GO" id="GO:0016260">
    <property type="term" value="P:selenocysteine biosynthetic process"/>
    <property type="evidence" value="ECO:0007669"/>
    <property type="project" value="UniProtKB-UniRule"/>
</dbReference>
<dbReference type="GO" id="GO:0006434">
    <property type="term" value="P:seryl-tRNA aminoacylation"/>
    <property type="evidence" value="ECO:0007669"/>
    <property type="project" value="UniProtKB-UniRule"/>
</dbReference>
<dbReference type="CDD" id="cd00770">
    <property type="entry name" value="SerRS_core"/>
    <property type="match status" value="1"/>
</dbReference>
<dbReference type="Gene3D" id="3.30.930.10">
    <property type="entry name" value="Bira Bifunctional Protein, Domain 2"/>
    <property type="match status" value="1"/>
</dbReference>
<dbReference type="Gene3D" id="1.10.287.40">
    <property type="entry name" value="Serine-tRNA synthetase, tRNA binding domain"/>
    <property type="match status" value="1"/>
</dbReference>
<dbReference type="HAMAP" id="MF_00176">
    <property type="entry name" value="Ser_tRNA_synth_type1"/>
    <property type="match status" value="1"/>
</dbReference>
<dbReference type="InterPro" id="IPR002314">
    <property type="entry name" value="aa-tRNA-synt_IIb"/>
</dbReference>
<dbReference type="InterPro" id="IPR006195">
    <property type="entry name" value="aa-tRNA-synth_II"/>
</dbReference>
<dbReference type="InterPro" id="IPR045864">
    <property type="entry name" value="aa-tRNA-synth_II/BPL/LPL"/>
</dbReference>
<dbReference type="InterPro" id="IPR002317">
    <property type="entry name" value="Ser-tRNA-ligase_type_1"/>
</dbReference>
<dbReference type="InterPro" id="IPR015866">
    <property type="entry name" value="Ser-tRNA-synth_1_N"/>
</dbReference>
<dbReference type="InterPro" id="IPR042103">
    <property type="entry name" value="SerRS_1_N_sf"/>
</dbReference>
<dbReference type="InterPro" id="IPR033729">
    <property type="entry name" value="SerRS_core"/>
</dbReference>
<dbReference type="InterPro" id="IPR010978">
    <property type="entry name" value="tRNA-bd_arm"/>
</dbReference>
<dbReference type="NCBIfam" id="TIGR00414">
    <property type="entry name" value="serS"/>
    <property type="match status" value="1"/>
</dbReference>
<dbReference type="PANTHER" id="PTHR43697:SF1">
    <property type="entry name" value="SERINE--TRNA LIGASE"/>
    <property type="match status" value="1"/>
</dbReference>
<dbReference type="PANTHER" id="PTHR43697">
    <property type="entry name" value="SERYL-TRNA SYNTHETASE"/>
    <property type="match status" value="1"/>
</dbReference>
<dbReference type="Pfam" id="PF02403">
    <property type="entry name" value="Seryl_tRNA_N"/>
    <property type="match status" value="1"/>
</dbReference>
<dbReference type="Pfam" id="PF00587">
    <property type="entry name" value="tRNA-synt_2b"/>
    <property type="match status" value="1"/>
</dbReference>
<dbReference type="PIRSF" id="PIRSF001529">
    <property type="entry name" value="Ser-tRNA-synth_IIa"/>
    <property type="match status" value="1"/>
</dbReference>
<dbReference type="PRINTS" id="PR00981">
    <property type="entry name" value="TRNASYNTHSER"/>
</dbReference>
<dbReference type="SUPFAM" id="SSF55681">
    <property type="entry name" value="Class II aaRS and biotin synthetases"/>
    <property type="match status" value="1"/>
</dbReference>
<dbReference type="SUPFAM" id="SSF46589">
    <property type="entry name" value="tRNA-binding arm"/>
    <property type="match status" value="1"/>
</dbReference>
<dbReference type="PROSITE" id="PS50862">
    <property type="entry name" value="AA_TRNA_LIGASE_II"/>
    <property type="match status" value="1"/>
</dbReference>
<accession>B9K8V5</accession>
<sequence length="425" mass="48664">MIDIKLIRQDPDFVKDALKKRGEDTDIIDEILKIDSEWRSVTTELNELRAKRNDISKNVAKLKKEGKSSEANALIEEGKRIGEEIKSLEEKEKELQSKLRDLLLRVPNIPHESVPVGSDESQNVEVRRWGEPRKFDFAPLAHWDLGPAWGLMDFDRASKLSGSRFTVMYGKLARLERALINFMLDVHTREHGYTEVWVPHLVKRETITITGQLPKFEEELYLTEKDDLFLIPTAEVPLVALHSGEILEEKDLPKKYVAYTPCYRREAGSYGKDVRGMIRQHQFDKVELVWITTPERSFDDLEQLVRDAETILQRLGLPYRVVSLCTGDLGFASAKTYDIEVWLPSYNAYKEISSCSNVTDFQARRGNMRYRRRSDGKLTLVHTLNGSGIAVGRTLVAILENYQQPDGSVKVPEALVPYTGFEVIP</sequence>
<organism>
    <name type="scientific">Thermotoga neapolitana (strain ATCC 49049 / DSM 4359 / NBRC 107923 / NS-E)</name>
    <dbReference type="NCBI Taxonomy" id="309803"/>
    <lineage>
        <taxon>Bacteria</taxon>
        <taxon>Thermotogati</taxon>
        <taxon>Thermotogota</taxon>
        <taxon>Thermotogae</taxon>
        <taxon>Thermotogales</taxon>
        <taxon>Thermotogaceae</taxon>
        <taxon>Thermotoga</taxon>
    </lineage>
</organism>
<reference key="1">
    <citation type="submission" date="2007-11" db="EMBL/GenBank/DDBJ databases">
        <title>The genome sequence of the hyperthermophilic bacterium Thermotoga neapolitana.</title>
        <authorList>
            <person name="Lim S.K."/>
            <person name="Kim J.S."/>
            <person name="Cha S.H."/>
            <person name="Park B.C."/>
            <person name="Lee D.S."/>
            <person name="Tae H.S."/>
            <person name="Kim S.-J."/>
            <person name="Kim J.J."/>
            <person name="Park K.J."/>
            <person name="Lee S.Y."/>
        </authorList>
    </citation>
    <scope>NUCLEOTIDE SEQUENCE [LARGE SCALE GENOMIC DNA]</scope>
    <source>
        <strain>ATCC 49049 / DSM 4359 / NBRC 107923 / NS-E</strain>
    </source>
</reference>
<protein>
    <recommendedName>
        <fullName evidence="1">Serine--tRNA ligase</fullName>
        <ecNumber evidence="1">6.1.1.11</ecNumber>
    </recommendedName>
    <alternativeName>
        <fullName evidence="1">Seryl-tRNA synthetase</fullName>
        <shortName evidence="1">SerRS</shortName>
    </alternativeName>
    <alternativeName>
        <fullName evidence="1">Seryl-tRNA(Ser/Sec) synthetase</fullName>
    </alternativeName>
</protein>
<proteinExistence type="inferred from homology"/>